<sequence>MGSLSIWHWIVVIAVVLLLFGRGKISDLMGDVAQGIKSFKKGLQDDEKTAEKPDAVKSLDHNATTGTPPNRTDVGSKAV</sequence>
<keyword id="KW-0997">Cell inner membrane</keyword>
<keyword id="KW-1003">Cell membrane</keyword>
<keyword id="KW-0472">Membrane</keyword>
<keyword id="KW-0653">Protein transport</keyword>
<keyword id="KW-1185">Reference proteome</keyword>
<keyword id="KW-0811">Translocation</keyword>
<keyword id="KW-0812">Transmembrane</keyword>
<keyword id="KW-1133">Transmembrane helix</keyword>
<keyword id="KW-0813">Transport</keyword>
<reference key="1">
    <citation type="submission" date="2006-01" db="EMBL/GenBank/DDBJ databases">
        <title>Complete sequence of Rhodopseudomonas palustris HaA2.</title>
        <authorList>
            <consortium name="US DOE Joint Genome Institute"/>
            <person name="Copeland A."/>
            <person name="Lucas S."/>
            <person name="Lapidus A."/>
            <person name="Barry K."/>
            <person name="Detter J.C."/>
            <person name="Glavina T."/>
            <person name="Hammon N."/>
            <person name="Israni S."/>
            <person name="Pitluck S."/>
            <person name="Chain P."/>
            <person name="Malfatti S."/>
            <person name="Shin M."/>
            <person name="Vergez L."/>
            <person name="Schmutz J."/>
            <person name="Larimer F."/>
            <person name="Land M."/>
            <person name="Hauser L."/>
            <person name="Pelletier D.A."/>
            <person name="Kyrpides N."/>
            <person name="Anderson I."/>
            <person name="Oda Y."/>
            <person name="Harwood C.S."/>
            <person name="Richardson P."/>
        </authorList>
    </citation>
    <scope>NUCLEOTIDE SEQUENCE [LARGE SCALE GENOMIC DNA]</scope>
    <source>
        <strain>HaA2</strain>
    </source>
</reference>
<protein>
    <recommendedName>
        <fullName evidence="1">Sec-independent protein translocase protein TatA</fullName>
    </recommendedName>
</protein>
<comment type="function">
    <text evidence="1">Part of the twin-arginine translocation (Tat) system that transports large folded proteins containing a characteristic twin-arginine motif in their signal peptide across membranes. TatA could form the protein-conducting channel of the Tat system.</text>
</comment>
<comment type="subunit">
    <text evidence="1">The Tat system comprises two distinct complexes: a TatABC complex, containing multiple copies of TatA, TatB and TatC subunits, and a separate TatA complex, containing only TatA subunits. Substrates initially bind to the TatABC complex, which probably triggers association of the separate TatA complex to form the active translocon.</text>
</comment>
<comment type="subcellular location">
    <subcellularLocation>
        <location evidence="1">Cell inner membrane</location>
        <topology evidence="1">Single-pass membrane protein</topology>
    </subcellularLocation>
</comment>
<comment type="similarity">
    <text evidence="1">Belongs to the TatA/E family.</text>
</comment>
<name>TATA_RHOP2</name>
<organism>
    <name type="scientific">Rhodopseudomonas palustris (strain HaA2)</name>
    <dbReference type="NCBI Taxonomy" id="316058"/>
    <lineage>
        <taxon>Bacteria</taxon>
        <taxon>Pseudomonadati</taxon>
        <taxon>Pseudomonadota</taxon>
        <taxon>Alphaproteobacteria</taxon>
        <taxon>Hyphomicrobiales</taxon>
        <taxon>Nitrobacteraceae</taxon>
        <taxon>Rhodopseudomonas</taxon>
    </lineage>
</organism>
<evidence type="ECO:0000255" key="1">
    <source>
        <dbReference type="HAMAP-Rule" id="MF_00236"/>
    </source>
</evidence>
<evidence type="ECO:0000256" key="2">
    <source>
        <dbReference type="SAM" id="MobiDB-lite"/>
    </source>
</evidence>
<accession>Q2IWG3</accession>
<proteinExistence type="inferred from homology"/>
<dbReference type="EMBL" id="CP000250">
    <property type="protein sequence ID" value="ABD07447.1"/>
    <property type="molecule type" value="Genomic_DNA"/>
</dbReference>
<dbReference type="RefSeq" id="WP_011441632.1">
    <property type="nucleotide sequence ID" value="NC_007778.1"/>
</dbReference>
<dbReference type="SMR" id="Q2IWG3"/>
<dbReference type="STRING" id="316058.RPB_2745"/>
<dbReference type="KEGG" id="rpb:RPB_2745"/>
<dbReference type="eggNOG" id="COG1826">
    <property type="taxonomic scope" value="Bacteria"/>
</dbReference>
<dbReference type="HOGENOM" id="CLU_086034_5_0_5"/>
<dbReference type="OrthoDB" id="7161179at2"/>
<dbReference type="Proteomes" id="UP000008809">
    <property type="component" value="Chromosome"/>
</dbReference>
<dbReference type="GO" id="GO:0033281">
    <property type="term" value="C:TAT protein transport complex"/>
    <property type="evidence" value="ECO:0007669"/>
    <property type="project" value="UniProtKB-UniRule"/>
</dbReference>
<dbReference type="GO" id="GO:0008320">
    <property type="term" value="F:protein transmembrane transporter activity"/>
    <property type="evidence" value="ECO:0007669"/>
    <property type="project" value="UniProtKB-UniRule"/>
</dbReference>
<dbReference type="GO" id="GO:0043953">
    <property type="term" value="P:protein transport by the Tat complex"/>
    <property type="evidence" value="ECO:0007669"/>
    <property type="project" value="UniProtKB-UniRule"/>
</dbReference>
<dbReference type="Gene3D" id="1.20.5.3310">
    <property type="match status" value="1"/>
</dbReference>
<dbReference type="HAMAP" id="MF_00236">
    <property type="entry name" value="TatA_E"/>
    <property type="match status" value="1"/>
</dbReference>
<dbReference type="InterPro" id="IPR003369">
    <property type="entry name" value="TatA/B/E"/>
</dbReference>
<dbReference type="InterPro" id="IPR006312">
    <property type="entry name" value="TatA/E"/>
</dbReference>
<dbReference type="NCBIfam" id="NF001940">
    <property type="entry name" value="PRK00720.1"/>
    <property type="match status" value="1"/>
</dbReference>
<dbReference type="NCBIfam" id="TIGR01411">
    <property type="entry name" value="tatAE"/>
    <property type="match status" value="1"/>
</dbReference>
<dbReference type="PANTHER" id="PTHR42982">
    <property type="entry name" value="SEC-INDEPENDENT PROTEIN TRANSLOCASE PROTEIN TATA"/>
    <property type="match status" value="1"/>
</dbReference>
<dbReference type="PANTHER" id="PTHR42982:SF1">
    <property type="entry name" value="SEC-INDEPENDENT PROTEIN TRANSLOCASE PROTEIN TATA"/>
    <property type="match status" value="1"/>
</dbReference>
<dbReference type="Pfam" id="PF02416">
    <property type="entry name" value="TatA_B_E"/>
    <property type="match status" value="1"/>
</dbReference>
<gene>
    <name evidence="1" type="primary">tatA</name>
    <name type="ordered locus">RPB_2745</name>
</gene>
<feature type="chain" id="PRO_1000044431" description="Sec-independent protein translocase protein TatA">
    <location>
        <begin position="1"/>
        <end position="79"/>
    </location>
</feature>
<feature type="transmembrane region" description="Helical" evidence="1">
    <location>
        <begin position="1"/>
        <end position="21"/>
    </location>
</feature>
<feature type="region of interest" description="Disordered" evidence="2">
    <location>
        <begin position="42"/>
        <end position="79"/>
    </location>
</feature>
<feature type="compositionally biased region" description="Basic and acidic residues" evidence="2">
    <location>
        <begin position="42"/>
        <end position="60"/>
    </location>
</feature>
<feature type="compositionally biased region" description="Polar residues" evidence="2">
    <location>
        <begin position="61"/>
        <end position="70"/>
    </location>
</feature>